<accession>A9GFF3</accession>
<evidence type="ECO:0000255" key="1">
    <source>
        <dbReference type="HAMAP-Rule" id="MF_00004"/>
    </source>
</evidence>
<dbReference type="EC" id="2.4.2.7" evidence="1"/>
<dbReference type="EMBL" id="AM746676">
    <property type="protein sequence ID" value="CAN93142.1"/>
    <property type="molecule type" value="Genomic_DNA"/>
</dbReference>
<dbReference type="RefSeq" id="WP_012235614.1">
    <property type="nucleotide sequence ID" value="NC_010162.1"/>
</dbReference>
<dbReference type="SMR" id="A9GFF3"/>
<dbReference type="STRING" id="448385.sce2983"/>
<dbReference type="KEGG" id="scl:sce2983"/>
<dbReference type="eggNOG" id="COG0503">
    <property type="taxonomic scope" value="Bacteria"/>
</dbReference>
<dbReference type="HOGENOM" id="CLU_063339_3_3_7"/>
<dbReference type="OrthoDB" id="9803963at2"/>
<dbReference type="BioCyc" id="SCEL448385:SCE_RS15315-MONOMER"/>
<dbReference type="UniPathway" id="UPA00588">
    <property type="reaction ID" value="UER00646"/>
</dbReference>
<dbReference type="Proteomes" id="UP000002139">
    <property type="component" value="Chromosome"/>
</dbReference>
<dbReference type="GO" id="GO:0005737">
    <property type="term" value="C:cytoplasm"/>
    <property type="evidence" value="ECO:0007669"/>
    <property type="project" value="UniProtKB-SubCell"/>
</dbReference>
<dbReference type="GO" id="GO:0002055">
    <property type="term" value="F:adenine binding"/>
    <property type="evidence" value="ECO:0007669"/>
    <property type="project" value="TreeGrafter"/>
</dbReference>
<dbReference type="GO" id="GO:0003999">
    <property type="term" value="F:adenine phosphoribosyltransferase activity"/>
    <property type="evidence" value="ECO:0007669"/>
    <property type="project" value="UniProtKB-UniRule"/>
</dbReference>
<dbReference type="GO" id="GO:0016208">
    <property type="term" value="F:AMP binding"/>
    <property type="evidence" value="ECO:0007669"/>
    <property type="project" value="TreeGrafter"/>
</dbReference>
<dbReference type="GO" id="GO:0006168">
    <property type="term" value="P:adenine salvage"/>
    <property type="evidence" value="ECO:0007669"/>
    <property type="project" value="InterPro"/>
</dbReference>
<dbReference type="GO" id="GO:0044209">
    <property type="term" value="P:AMP salvage"/>
    <property type="evidence" value="ECO:0007669"/>
    <property type="project" value="UniProtKB-UniRule"/>
</dbReference>
<dbReference type="GO" id="GO:0006166">
    <property type="term" value="P:purine ribonucleoside salvage"/>
    <property type="evidence" value="ECO:0007669"/>
    <property type="project" value="UniProtKB-KW"/>
</dbReference>
<dbReference type="CDD" id="cd06223">
    <property type="entry name" value="PRTases_typeI"/>
    <property type="match status" value="1"/>
</dbReference>
<dbReference type="FunFam" id="3.40.50.2020:FF:000021">
    <property type="entry name" value="Adenine phosphoribosyltransferase"/>
    <property type="match status" value="1"/>
</dbReference>
<dbReference type="Gene3D" id="3.40.50.2020">
    <property type="match status" value="1"/>
</dbReference>
<dbReference type="HAMAP" id="MF_00004">
    <property type="entry name" value="Aden_phosphoribosyltr"/>
    <property type="match status" value="1"/>
</dbReference>
<dbReference type="InterPro" id="IPR005764">
    <property type="entry name" value="Ade_phspho_trans"/>
</dbReference>
<dbReference type="InterPro" id="IPR000836">
    <property type="entry name" value="PRibTrfase_dom"/>
</dbReference>
<dbReference type="InterPro" id="IPR029057">
    <property type="entry name" value="PRTase-like"/>
</dbReference>
<dbReference type="InterPro" id="IPR050054">
    <property type="entry name" value="UPRTase/APRTase"/>
</dbReference>
<dbReference type="NCBIfam" id="TIGR01090">
    <property type="entry name" value="apt"/>
    <property type="match status" value="1"/>
</dbReference>
<dbReference type="NCBIfam" id="NF002634">
    <property type="entry name" value="PRK02304.1-3"/>
    <property type="match status" value="1"/>
</dbReference>
<dbReference type="NCBIfam" id="NF002636">
    <property type="entry name" value="PRK02304.1-5"/>
    <property type="match status" value="1"/>
</dbReference>
<dbReference type="PANTHER" id="PTHR32315">
    <property type="entry name" value="ADENINE PHOSPHORIBOSYLTRANSFERASE"/>
    <property type="match status" value="1"/>
</dbReference>
<dbReference type="PANTHER" id="PTHR32315:SF3">
    <property type="entry name" value="ADENINE PHOSPHORIBOSYLTRANSFERASE"/>
    <property type="match status" value="1"/>
</dbReference>
<dbReference type="Pfam" id="PF00156">
    <property type="entry name" value="Pribosyltran"/>
    <property type="match status" value="1"/>
</dbReference>
<dbReference type="SUPFAM" id="SSF53271">
    <property type="entry name" value="PRTase-like"/>
    <property type="match status" value="1"/>
</dbReference>
<dbReference type="PROSITE" id="PS00103">
    <property type="entry name" value="PUR_PYR_PR_TRANSFER"/>
    <property type="match status" value="1"/>
</dbReference>
<feature type="chain" id="PRO_0000334719" description="Adenine phosphoribosyltransferase">
    <location>
        <begin position="1"/>
        <end position="200"/>
    </location>
</feature>
<comment type="function">
    <text evidence="1">Catalyzes a salvage reaction resulting in the formation of AMP, that is energically less costly than de novo synthesis.</text>
</comment>
<comment type="catalytic activity">
    <reaction evidence="1">
        <text>AMP + diphosphate = 5-phospho-alpha-D-ribose 1-diphosphate + adenine</text>
        <dbReference type="Rhea" id="RHEA:16609"/>
        <dbReference type="ChEBI" id="CHEBI:16708"/>
        <dbReference type="ChEBI" id="CHEBI:33019"/>
        <dbReference type="ChEBI" id="CHEBI:58017"/>
        <dbReference type="ChEBI" id="CHEBI:456215"/>
        <dbReference type="EC" id="2.4.2.7"/>
    </reaction>
</comment>
<comment type="pathway">
    <text evidence="1">Purine metabolism; AMP biosynthesis via salvage pathway; AMP from adenine: step 1/1.</text>
</comment>
<comment type="subunit">
    <text evidence="1">Homodimer.</text>
</comment>
<comment type="subcellular location">
    <subcellularLocation>
        <location evidence="1">Cytoplasm</location>
    </subcellularLocation>
</comment>
<comment type="similarity">
    <text evidence="1">Belongs to the purine/pyrimidine phosphoribosyltransferase family.</text>
</comment>
<keyword id="KW-0963">Cytoplasm</keyword>
<keyword id="KW-0328">Glycosyltransferase</keyword>
<keyword id="KW-0660">Purine salvage</keyword>
<keyword id="KW-1185">Reference proteome</keyword>
<keyword id="KW-0808">Transferase</keyword>
<sequence>MRSPTLGVMFNHDALPSEHALRYLKAHLRNVPDFPKPGILFKDITPLLADPRALHITLDLLAQRFVGEHVDVVVGVESRGFIFGGALSARLNASFVPVRKPGKLPAATDRVAYALEYGTAELEMHKGSIRPGARVLIVDDLLATGGTASAAAELARKQGGEVAGFAFVVELDFLGGRALLAERAGDAAPVFSIVHFAAGE</sequence>
<protein>
    <recommendedName>
        <fullName evidence="1">Adenine phosphoribosyltransferase</fullName>
        <shortName evidence="1">APRT</shortName>
        <ecNumber evidence="1">2.4.2.7</ecNumber>
    </recommendedName>
</protein>
<name>APT_SORC5</name>
<reference key="1">
    <citation type="journal article" date="2007" name="Nat. Biotechnol.">
        <title>Complete genome sequence of the myxobacterium Sorangium cellulosum.</title>
        <authorList>
            <person name="Schneiker S."/>
            <person name="Perlova O."/>
            <person name="Kaiser O."/>
            <person name="Gerth K."/>
            <person name="Alici A."/>
            <person name="Altmeyer M.O."/>
            <person name="Bartels D."/>
            <person name="Bekel T."/>
            <person name="Beyer S."/>
            <person name="Bode E."/>
            <person name="Bode H.B."/>
            <person name="Bolten C.J."/>
            <person name="Choudhuri J.V."/>
            <person name="Doss S."/>
            <person name="Elnakady Y.A."/>
            <person name="Frank B."/>
            <person name="Gaigalat L."/>
            <person name="Goesmann A."/>
            <person name="Groeger C."/>
            <person name="Gross F."/>
            <person name="Jelsbak L."/>
            <person name="Jelsbak L."/>
            <person name="Kalinowski J."/>
            <person name="Kegler C."/>
            <person name="Knauber T."/>
            <person name="Konietzny S."/>
            <person name="Kopp M."/>
            <person name="Krause L."/>
            <person name="Krug D."/>
            <person name="Linke B."/>
            <person name="Mahmud T."/>
            <person name="Martinez-Arias R."/>
            <person name="McHardy A.C."/>
            <person name="Merai M."/>
            <person name="Meyer F."/>
            <person name="Mormann S."/>
            <person name="Munoz-Dorado J."/>
            <person name="Perez J."/>
            <person name="Pradella S."/>
            <person name="Rachid S."/>
            <person name="Raddatz G."/>
            <person name="Rosenau F."/>
            <person name="Rueckert C."/>
            <person name="Sasse F."/>
            <person name="Scharfe M."/>
            <person name="Schuster S.C."/>
            <person name="Suen G."/>
            <person name="Treuner-Lange A."/>
            <person name="Velicer G.J."/>
            <person name="Vorholter F.-J."/>
            <person name="Weissman K.J."/>
            <person name="Welch R.D."/>
            <person name="Wenzel S.C."/>
            <person name="Whitworth D.E."/>
            <person name="Wilhelm S."/>
            <person name="Wittmann C."/>
            <person name="Bloecker H."/>
            <person name="Puehler A."/>
            <person name="Mueller R."/>
        </authorList>
    </citation>
    <scope>NUCLEOTIDE SEQUENCE [LARGE SCALE GENOMIC DNA]</scope>
    <source>
        <strain>So ce56</strain>
    </source>
</reference>
<organism>
    <name type="scientific">Sorangium cellulosum (strain So ce56)</name>
    <name type="common">Polyangium cellulosum (strain So ce56)</name>
    <dbReference type="NCBI Taxonomy" id="448385"/>
    <lineage>
        <taxon>Bacteria</taxon>
        <taxon>Pseudomonadati</taxon>
        <taxon>Myxococcota</taxon>
        <taxon>Polyangia</taxon>
        <taxon>Polyangiales</taxon>
        <taxon>Polyangiaceae</taxon>
        <taxon>Sorangium</taxon>
    </lineage>
</organism>
<proteinExistence type="inferred from homology"/>
<gene>
    <name evidence="1" type="primary">apt</name>
    <name type="ordered locus">sce2983</name>
</gene>